<gene>
    <name evidence="1" type="primary">rplU</name>
    <name type="ordered locus">RT0736</name>
</gene>
<name>RL21_RICTY</name>
<feature type="chain" id="PRO_0000270731" description="Large ribosomal subunit protein bL21">
    <location>
        <begin position="1"/>
        <end position="105"/>
    </location>
</feature>
<protein>
    <recommendedName>
        <fullName evidence="1">Large ribosomal subunit protein bL21</fullName>
    </recommendedName>
    <alternativeName>
        <fullName evidence="2">50S ribosomal protein L21</fullName>
    </alternativeName>
</protein>
<reference key="1">
    <citation type="journal article" date="2004" name="J. Bacteriol.">
        <title>Complete genome sequence of Rickettsia typhi and comparison with sequences of other Rickettsiae.</title>
        <authorList>
            <person name="McLeod M.P."/>
            <person name="Qin X."/>
            <person name="Karpathy S.E."/>
            <person name="Gioia J."/>
            <person name="Highlander S.K."/>
            <person name="Fox G.E."/>
            <person name="McNeill T.Z."/>
            <person name="Jiang H."/>
            <person name="Muzny D."/>
            <person name="Jacob L.S."/>
            <person name="Hawes A.C."/>
            <person name="Sodergren E."/>
            <person name="Gill R."/>
            <person name="Hume J."/>
            <person name="Morgan M."/>
            <person name="Fan G."/>
            <person name="Amin A.G."/>
            <person name="Gibbs R.A."/>
            <person name="Hong C."/>
            <person name="Yu X.-J."/>
            <person name="Walker D.H."/>
            <person name="Weinstock G.M."/>
        </authorList>
    </citation>
    <scope>NUCLEOTIDE SEQUENCE [LARGE SCALE GENOMIC DNA]</scope>
    <source>
        <strain>ATCC VR-144 / Wilmington</strain>
    </source>
</reference>
<comment type="function">
    <text evidence="1">This protein binds to 23S rRNA in the presence of protein L20.</text>
</comment>
<comment type="subunit">
    <text evidence="1">Part of the 50S ribosomal subunit. Contacts protein L20.</text>
</comment>
<comment type="similarity">
    <text evidence="1">Belongs to the bacterial ribosomal protein bL21 family.</text>
</comment>
<dbReference type="EMBL" id="AE017197">
    <property type="protein sequence ID" value="AAU04193.1"/>
    <property type="molecule type" value="Genomic_DNA"/>
</dbReference>
<dbReference type="RefSeq" id="WP_011191169.1">
    <property type="nucleotide sequence ID" value="NC_006142.1"/>
</dbReference>
<dbReference type="SMR" id="Q68VZ9"/>
<dbReference type="KEGG" id="rty:RT0736"/>
<dbReference type="eggNOG" id="COG0261">
    <property type="taxonomic scope" value="Bacteria"/>
</dbReference>
<dbReference type="HOGENOM" id="CLU_061463_3_2_5"/>
<dbReference type="OrthoDB" id="9813334at2"/>
<dbReference type="Proteomes" id="UP000000604">
    <property type="component" value="Chromosome"/>
</dbReference>
<dbReference type="GO" id="GO:0005737">
    <property type="term" value="C:cytoplasm"/>
    <property type="evidence" value="ECO:0007669"/>
    <property type="project" value="UniProtKB-ARBA"/>
</dbReference>
<dbReference type="GO" id="GO:1990904">
    <property type="term" value="C:ribonucleoprotein complex"/>
    <property type="evidence" value="ECO:0007669"/>
    <property type="project" value="UniProtKB-KW"/>
</dbReference>
<dbReference type="GO" id="GO:0005840">
    <property type="term" value="C:ribosome"/>
    <property type="evidence" value="ECO:0007669"/>
    <property type="project" value="UniProtKB-KW"/>
</dbReference>
<dbReference type="GO" id="GO:0019843">
    <property type="term" value="F:rRNA binding"/>
    <property type="evidence" value="ECO:0007669"/>
    <property type="project" value="UniProtKB-UniRule"/>
</dbReference>
<dbReference type="GO" id="GO:0003735">
    <property type="term" value="F:structural constituent of ribosome"/>
    <property type="evidence" value="ECO:0007669"/>
    <property type="project" value="InterPro"/>
</dbReference>
<dbReference type="GO" id="GO:0006412">
    <property type="term" value="P:translation"/>
    <property type="evidence" value="ECO:0007669"/>
    <property type="project" value="UniProtKB-UniRule"/>
</dbReference>
<dbReference type="HAMAP" id="MF_01363">
    <property type="entry name" value="Ribosomal_bL21"/>
    <property type="match status" value="1"/>
</dbReference>
<dbReference type="InterPro" id="IPR028909">
    <property type="entry name" value="bL21-like"/>
</dbReference>
<dbReference type="InterPro" id="IPR036164">
    <property type="entry name" value="bL21-like_sf"/>
</dbReference>
<dbReference type="InterPro" id="IPR001787">
    <property type="entry name" value="Ribosomal_bL21"/>
</dbReference>
<dbReference type="InterPro" id="IPR018258">
    <property type="entry name" value="Ribosomal_bL21_CS"/>
</dbReference>
<dbReference type="NCBIfam" id="TIGR00061">
    <property type="entry name" value="L21"/>
    <property type="match status" value="1"/>
</dbReference>
<dbReference type="PANTHER" id="PTHR21349">
    <property type="entry name" value="50S RIBOSOMAL PROTEIN L21"/>
    <property type="match status" value="1"/>
</dbReference>
<dbReference type="PANTHER" id="PTHR21349:SF0">
    <property type="entry name" value="LARGE RIBOSOMAL SUBUNIT PROTEIN BL21M"/>
    <property type="match status" value="1"/>
</dbReference>
<dbReference type="Pfam" id="PF00829">
    <property type="entry name" value="Ribosomal_L21p"/>
    <property type="match status" value="1"/>
</dbReference>
<dbReference type="SUPFAM" id="SSF141091">
    <property type="entry name" value="L21p-like"/>
    <property type="match status" value="1"/>
</dbReference>
<dbReference type="PROSITE" id="PS01169">
    <property type="entry name" value="RIBOSOMAL_L21"/>
    <property type="match status" value="1"/>
</dbReference>
<keyword id="KW-0687">Ribonucleoprotein</keyword>
<keyword id="KW-0689">Ribosomal protein</keyword>
<keyword id="KW-0694">RNA-binding</keyword>
<keyword id="KW-0699">rRNA-binding</keyword>
<organism>
    <name type="scientific">Rickettsia typhi (strain ATCC VR-144 / Wilmington)</name>
    <dbReference type="NCBI Taxonomy" id="257363"/>
    <lineage>
        <taxon>Bacteria</taxon>
        <taxon>Pseudomonadati</taxon>
        <taxon>Pseudomonadota</taxon>
        <taxon>Alphaproteobacteria</taxon>
        <taxon>Rickettsiales</taxon>
        <taxon>Rickettsiaceae</taxon>
        <taxon>Rickettsieae</taxon>
        <taxon>Rickettsia</taxon>
        <taxon>typhus group</taxon>
    </lineage>
</organism>
<proteinExistence type="inferred from homology"/>
<accession>Q68VZ9</accession>
<sequence length="105" mass="11976">MFAVIKAGGKQYKVDRNSVIKIEKIDGELGSKVQFDQILMIGEYSKPSFIGTPIVKGAIVTAEITNQLKDNKIIAFKKKRRKNYRRKAGHRQELTELKILDITKQ</sequence>
<evidence type="ECO:0000255" key="1">
    <source>
        <dbReference type="HAMAP-Rule" id="MF_01363"/>
    </source>
</evidence>
<evidence type="ECO:0000305" key="2"/>